<comment type="subunit">
    <text evidence="1">Part of the 50S ribosomal subunit.</text>
</comment>
<comment type="similarity">
    <text evidence="1">Belongs to the universal ribosomal protein uL30 family.</text>
</comment>
<accession>Q889V3</accession>
<sequence>MATVKVTLIKSMTGRIPNHRLCIKGLGLRRIGHTVEVLDTPENRGMINKAYYMLRVEG</sequence>
<feature type="chain" id="PRO_0000273832" description="Large ribosomal subunit protein uL30">
    <location>
        <begin position="1"/>
        <end position="58"/>
    </location>
</feature>
<dbReference type="EMBL" id="AE016853">
    <property type="protein sequence ID" value="AAO54186.1"/>
    <property type="molecule type" value="Genomic_DNA"/>
</dbReference>
<dbReference type="RefSeq" id="NP_790491.1">
    <property type="nucleotide sequence ID" value="NC_004578.1"/>
</dbReference>
<dbReference type="RefSeq" id="WP_002555471.1">
    <property type="nucleotide sequence ID" value="NC_004578.1"/>
</dbReference>
<dbReference type="SMR" id="Q889V3"/>
<dbReference type="STRING" id="223283.PSPTO_0644"/>
<dbReference type="GeneID" id="77280356"/>
<dbReference type="KEGG" id="pst:PSPTO_0644"/>
<dbReference type="PATRIC" id="fig|223283.9.peg.650"/>
<dbReference type="eggNOG" id="COG1841">
    <property type="taxonomic scope" value="Bacteria"/>
</dbReference>
<dbReference type="HOGENOM" id="CLU_131047_1_4_6"/>
<dbReference type="OrthoDB" id="9812790at2"/>
<dbReference type="PhylomeDB" id="Q889V3"/>
<dbReference type="Proteomes" id="UP000002515">
    <property type="component" value="Chromosome"/>
</dbReference>
<dbReference type="GO" id="GO:0015934">
    <property type="term" value="C:large ribosomal subunit"/>
    <property type="evidence" value="ECO:0007669"/>
    <property type="project" value="InterPro"/>
</dbReference>
<dbReference type="GO" id="GO:0003735">
    <property type="term" value="F:structural constituent of ribosome"/>
    <property type="evidence" value="ECO:0007669"/>
    <property type="project" value="InterPro"/>
</dbReference>
<dbReference type="GO" id="GO:0006412">
    <property type="term" value="P:translation"/>
    <property type="evidence" value="ECO:0007669"/>
    <property type="project" value="UniProtKB-UniRule"/>
</dbReference>
<dbReference type="CDD" id="cd01658">
    <property type="entry name" value="Ribosomal_L30"/>
    <property type="match status" value="1"/>
</dbReference>
<dbReference type="FunFam" id="3.30.1390.20:FF:000001">
    <property type="entry name" value="50S ribosomal protein L30"/>
    <property type="match status" value="1"/>
</dbReference>
<dbReference type="Gene3D" id="3.30.1390.20">
    <property type="entry name" value="Ribosomal protein L30, ferredoxin-like fold domain"/>
    <property type="match status" value="1"/>
</dbReference>
<dbReference type="HAMAP" id="MF_01371_B">
    <property type="entry name" value="Ribosomal_uL30_B"/>
    <property type="match status" value="1"/>
</dbReference>
<dbReference type="InterPro" id="IPR036919">
    <property type="entry name" value="Ribo_uL30_ferredoxin-like_sf"/>
</dbReference>
<dbReference type="InterPro" id="IPR005996">
    <property type="entry name" value="Ribosomal_uL30_bac-type"/>
</dbReference>
<dbReference type="InterPro" id="IPR016082">
    <property type="entry name" value="Ribosomal_uL30_ferredoxin-like"/>
</dbReference>
<dbReference type="NCBIfam" id="TIGR01308">
    <property type="entry name" value="rpmD_bact"/>
    <property type="match status" value="1"/>
</dbReference>
<dbReference type="Pfam" id="PF00327">
    <property type="entry name" value="Ribosomal_L30"/>
    <property type="match status" value="1"/>
</dbReference>
<dbReference type="PIRSF" id="PIRSF002211">
    <property type="entry name" value="Ribosomal_L30_bac-type"/>
    <property type="match status" value="1"/>
</dbReference>
<dbReference type="SUPFAM" id="SSF55129">
    <property type="entry name" value="Ribosomal protein L30p/L7e"/>
    <property type="match status" value="1"/>
</dbReference>
<name>RL30_PSESM</name>
<organism>
    <name type="scientific">Pseudomonas syringae pv. tomato (strain ATCC BAA-871 / DC3000)</name>
    <dbReference type="NCBI Taxonomy" id="223283"/>
    <lineage>
        <taxon>Bacteria</taxon>
        <taxon>Pseudomonadati</taxon>
        <taxon>Pseudomonadota</taxon>
        <taxon>Gammaproteobacteria</taxon>
        <taxon>Pseudomonadales</taxon>
        <taxon>Pseudomonadaceae</taxon>
        <taxon>Pseudomonas</taxon>
    </lineage>
</organism>
<keyword id="KW-1185">Reference proteome</keyword>
<keyword id="KW-0687">Ribonucleoprotein</keyword>
<keyword id="KW-0689">Ribosomal protein</keyword>
<proteinExistence type="inferred from homology"/>
<protein>
    <recommendedName>
        <fullName evidence="1">Large ribosomal subunit protein uL30</fullName>
    </recommendedName>
    <alternativeName>
        <fullName evidence="2">50S ribosomal protein L30</fullName>
    </alternativeName>
</protein>
<gene>
    <name evidence="1" type="primary">rpmD</name>
    <name type="ordered locus">PSPTO_0644</name>
</gene>
<reference key="1">
    <citation type="journal article" date="2003" name="Proc. Natl. Acad. Sci. U.S.A.">
        <title>The complete genome sequence of the Arabidopsis and tomato pathogen Pseudomonas syringae pv. tomato DC3000.</title>
        <authorList>
            <person name="Buell C.R."/>
            <person name="Joardar V."/>
            <person name="Lindeberg M."/>
            <person name="Selengut J."/>
            <person name="Paulsen I.T."/>
            <person name="Gwinn M.L."/>
            <person name="Dodson R.J."/>
            <person name="DeBoy R.T."/>
            <person name="Durkin A.S."/>
            <person name="Kolonay J.F."/>
            <person name="Madupu R."/>
            <person name="Daugherty S.C."/>
            <person name="Brinkac L.M."/>
            <person name="Beanan M.J."/>
            <person name="Haft D.H."/>
            <person name="Nelson W.C."/>
            <person name="Davidsen T.M."/>
            <person name="Zafar N."/>
            <person name="Zhou L."/>
            <person name="Liu J."/>
            <person name="Yuan Q."/>
            <person name="Khouri H.M."/>
            <person name="Fedorova N.B."/>
            <person name="Tran B."/>
            <person name="Russell D."/>
            <person name="Berry K.J."/>
            <person name="Utterback T.R."/>
            <person name="Van Aken S.E."/>
            <person name="Feldblyum T.V."/>
            <person name="D'Ascenzo M."/>
            <person name="Deng W.-L."/>
            <person name="Ramos A.R."/>
            <person name="Alfano J.R."/>
            <person name="Cartinhour S."/>
            <person name="Chatterjee A.K."/>
            <person name="Delaney T.P."/>
            <person name="Lazarowitz S.G."/>
            <person name="Martin G.B."/>
            <person name="Schneider D.J."/>
            <person name="Tang X."/>
            <person name="Bender C.L."/>
            <person name="White O."/>
            <person name="Fraser C.M."/>
            <person name="Collmer A."/>
        </authorList>
    </citation>
    <scope>NUCLEOTIDE SEQUENCE [LARGE SCALE GENOMIC DNA]</scope>
    <source>
        <strain>ATCC BAA-871 / DC3000</strain>
    </source>
</reference>
<evidence type="ECO:0000255" key="1">
    <source>
        <dbReference type="HAMAP-Rule" id="MF_01371"/>
    </source>
</evidence>
<evidence type="ECO:0000305" key="2"/>